<proteinExistence type="evidence at protein level"/>
<feature type="chain" id="PRO_0000109925" description="Oxygen-dependent coproporphyrinogen-III oxidase">
    <location>
        <begin position="1"/>
        <end position="340"/>
    </location>
</feature>
<feature type="region of interest" description="Disordered" evidence="2">
    <location>
        <begin position="1"/>
        <end position="22"/>
    </location>
</feature>
<feature type="region of interest" description="Important for dimerization" evidence="1">
    <location>
        <begin position="278"/>
        <end position="313"/>
    </location>
</feature>
<feature type="compositionally biased region" description="Polar residues" evidence="2">
    <location>
        <begin position="1"/>
        <end position="14"/>
    </location>
</feature>
<feature type="active site" description="Proton donor" evidence="1">
    <location>
        <position position="123"/>
    </location>
</feature>
<feature type="binding site" evidence="1">
    <location>
        <position position="109"/>
    </location>
    <ligand>
        <name>substrate</name>
    </ligand>
</feature>
<feature type="binding site" evidence="1">
    <location>
        <position position="113"/>
    </location>
    <ligand>
        <name>a divalent metal cation</name>
        <dbReference type="ChEBI" id="CHEBI:60240"/>
    </ligand>
</feature>
<feature type="binding site" evidence="1">
    <location>
        <position position="123"/>
    </location>
    <ligand>
        <name>a divalent metal cation</name>
        <dbReference type="ChEBI" id="CHEBI:60240"/>
    </ligand>
</feature>
<feature type="binding site" evidence="1">
    <location>
        <begin position="125"/>
        <end position="127"/>
    </location>
    <ligand>
        <name>substrate</name>
    </ligand>
</feature>
<feature type="binding site" evidence="1">
    <location>
        <position position="157"/>
    </location>
    <ligand>
        <name>a divalent metal cation</name>
        <dbReference type="ChEBI" id="CHEBI:60240"/>
    </ligand>
</feature>
<feature type="binding site" evidence="1">
    <location>
        <position position="187"/>
    </location>
    <ligand>
        <name>a divalent metal cation</name>
        <dbReference type="ChEBI" id="CHEBI:60240"/>
    </ligand>
</feature>
<feature type="binding site" evidence="1">
    <location>
        <begin position="296"/>
        <end position="298"/>
    </location>
    <ligand>
        <name>substrate</name>
    </ligand>
</feature>
<feature type="site" description="Important for dimerization" evidence="1">
    <location>
        <position position="187"/>
    </location>
</feature>
<accession>P72848</accession>
<name>HEM6_SYNY3</name>
<gene>
    <name evidence="1" type="primary">hemF</name>
    <name type="ordered locus">sll1185</name>
</gene>
<reference key="1">
    <citation type="journal article" date="1996" name="DNA Res.">
        <title>Sequence analysis of the genome of the unicellular cyanobacterium Synechocystis sp. strain PCC6803. II. Sequence determination of the entire genome and assignment of potential protein-coding regions.</title>
        <authorList>
            <person name="Kaneko T."/>
            <person name="Sato S."/>
            <person name="Kotani H."/>
            <person name="Tanaka A."/>
            <person name="Asamizu E."/>
            <person name="Nakamura Y."/>
            <person name="Miyajima N."/>
            <person name="Hirosawa M."/>
            <person name="Sugiura M."/>
            <person name="Sasamoto S."/>
            <person name="Kimura T."/>
            <person name="Hosouchi T."/>
            <person name="Matsuno A."/>
            <person name="Muraki A."/>
            <person name="Nakazaki N."/>
            <person name="Naruo K."/>
            <person name="Okumura S."/>
            <person name="Shimpo S."/>
            <person name="Takeuchi C."/>
            <person name="Wada T."/>
            <person name="Watanabe A."/>
            <person name="Yamada M."/>
            <person name="Yasuda M."/>
            <person name="Tabata S."/>
        </authorList>
    </citation>
    <scope>NUCLEOTIDE SEQUENCE [LARGE SCALE GENOMIC DNA]</scope>
    <source>
        <strain>ATCC 27184 / PCC 6803 / Kazusa</strain>
    </source>
</reference>
<reference key="2">
    <citation type="journal article" date="2010" name="Plant Cell Physiol.">
        <title>Functional differentiation of two analogous coproporphyrinogen III oxidases for heme and chlorophyll biosynthesis pathways in the cyanobacterium Synechocystis sp. PCC 6803.</title>
        <authorList>
            <person name="Goto T."/>
            <person name="Aoki R."/>
            <person name="Minamizaki K."/>
            <person name="Fujita Y."/>
        </authorList>
    </citation>
    <scope>FUNCTION</scope>
    <scope>CATALYTIC ACTIVITY</scope>
    <scope>DISRUPTION PHENOTYPE</scope>
    <scope>COFACTOR</scope>
    <scope>INDUCTION</scope>
    <source>
        <strain>ATCC 27184 / PCC 6803 / Kazusa</strain>
    </source>
</reference>
<protein>
    <recommendedName>
        <fullName evidence="1">Oxygen-dependent coproporphyrinogen-III oxidase</fullName>
        <shortName evidence="1">CPO</shortName>
        <shortName evidence="1">Coprogen oxidase</shortName>
        <shortName evidence="1">Coproporphyrinogenase</shortName>
        <ecNumber evidence="1">1.3.3.3</ecNumber>
    </recommendedName>
</protein>
<dbReference type="EC" id="1.3.3.3" evidence="1"/>
<dbReference type="EMBL" id="BA000022">
    <property type="protein sequence ID" value="BAA16863.1"/>
    <property type="molecule type" value="Genomic_DNA"/>
</dbReference>
<dbReference type="PIR" id="S74712">
    <property type="entry name" value="S74712"/>
</dbReference>
<dbReference type="SMR" id="P72848"/>
<dbReference type="STRING" id="1148.gene:10497721"/>
<dbReference type="PaxDb" id="1148-1651937"/>
<dbReference type="EnsemblBacteria" id="BAA16863">
    <property type="protein sequence ID" value="BAA16863"/>
    <property type="gene ID" value="BAA16863"/>
</dbReference>
<dbReference type="KEGG" id="syn:sll1185"/>
<dbReference type="eggNOG" id="COG0408">
    <property type="taxonomic scope" value="Bacteria"/>
</dbReference>
<dbReference type="InParanoid" id="P72848"/>
<dbReference type="PhylomeDB" id="P72848"/>
<dbReference type="BRENDA" id="1.3.3.3">
    <property type="organism ID" value="382"/>
</dbReference>
<dbReference type="UniPathway" id="UPA00251">
    <property type="reaction ID" value="UER00322"/>
</dbReference>
<dbReference type="Proteomes" id="UP000001425">
    <property type="component" value="Chromosome"/>
</dbReference>
<dbReference type="GO" id="GO:0005737">
    <property type="term" value="C:cytoplasm"/>
    <property type="evidence" value="ECO:0000318"/>
    <property type="project" value="GO_Central"/>
</dbReference>
<dbReference type="GO" id="GO:0004109">
    <property type="term" value="F:coproporphyrinogen oxidase activity"/>
    <property type="evidence" value="ECO:0000314"/>
    <property type="project" value="UniProtKB"/>
</dbReference>
<dbReference type="GO" id="GO:0046872">
    <property type="term" value="F:metal ion binding"/>
    <property type="evidence" value="ECO:0007669"/>
    <property type="project" value="UniProtKB-KW"/>
</dbReference>
<dbReference type="GO" id="GO:0042803">
    <property type="term" value="F:protein homodimerization activity"/>
    <property type="evidence" value="ECO:0000250"/>
    <property type="project" value="UniProtKB"/>
</dbReference>
<dbReference type="GO" id="GO:0015995">
    <property type="term" value="P:chlorophyll biosynthetic process"/>
    <property type="evidence" value="ECO:0007669"/>
    <property type="project" value="UniProtKB-UniRule"/>
</dbReference>
<dbReference type="GO" id="GO:0006782">
    <property type="term" value="P:protoporphyrinogen IX biosynthetic process"/>
    <property type="evidence" value="ECO:0000315"/>
    <property type="project" value="UniProtKB"/>
</dbReference>
<dbReference type="FunFam" id="3.40.1500.10:FF:000007">
    <property type="entry name" value="Oxygen-dependent coproporphyrinogen-III oxidase"/>
    <property type="match status" value="1"/>
</dbReference>
<dbReference type="Gene3D" id="3.40.1500.10">
    <property type="entry name" value="Coproporphyrinogen III oxidase, aerobic"/>
    <property type="match status" value="1"/>
</dbReference>
<dbReference type="HAMAP" id="MF_00333">
    <property type="entry name" value="Coprogen_oxidas"/>
    <property type="match status" value="1"/>
</dbReference>
<dbReference type="InterPro" id="IPR001260">
    <property type="entry name" value="Coprogen_oxidase_aer"/>
</dbReference>
<dbReference type="InterPro" id="IPR036406">
    <property type="entry name" value="Coprogen_oxidase_aer_sf"/>
</dbReference>
<dbReference type="InterPro" id="IPR018375">
    <property type="entry name" value="Coprogen_oxidase_CS"/>
</dbReference>
<dbReference type="NCBIfam" id="NF003727">
    <property type="entry name" value="PRK05330.1"/>
    <property type="match status" value="1"/>
</dbReference>
<dbReference type="PANTHER" id="PTHR10755">
    <property type="entry name" value="COPROPORPHYRINOGEN III OXIDASE, MITOCHONDRIAL"/>
    <property type="match status" value="1"/>
</dbReference>
<dbReference type="PANTHER" id="PTHR10755:SF0">
    <property type="entry name" value="OXYGEN-DEPENDENT COPROPORPHYRINOGEN-III OXIDASE, MITOCHONDRIAL"/>
    <property type="match status" value="1"/>
</dbReference>
<dbReference type="Pfam" id="PF01218">
    <property type="entry name" value="Coprogen_oxidas"/>
    <property type="match status" value="1"/>
</dbReference>
<dbReference type="PIRSF" id="PIRSF000166">
    <property type="entry name" value="Coproporphyri_ox"/>
    <property type="match status" value="1"/>
</dbReference>
<dbReference type="PRINTS" id="PR00073">
    <property type="entry name" value="COPRGNOXDASE"/>
</dbReference>
<dbReference type="SUPFAM" id="SSF102886">
    <property type="entry name" value="Coproporphyrinogen III oxidase"/>
    <property type="match status" value="1"/>
</dbReference>
<dbReference type="PROSITE" id="PS01021">
    <property type="entry name" value="COPROGEN_OXIDASE"/>
    <property type="match status" value="1"/>
</dbReference>
<comment type="function">
    <text evidence="1 3">Involved in the heme and chlorophyll biosynthesis. Catalyzes the aerobic oxidative decarboxylation of propionate groups of rings A and B of coproporphyrinogen-III to yield the vinyl groups in protoporphyrinogen-IX.</text>
</comment>
<comment type="catalytic activity">
    <reaction evidence="1 3">
        <text>coproporphyrinogen III + O2 + 2 H(+) = protoporphyrinogen IX + 2 CO2 + 2 H2O</text>
        <dbReference type="Rhea" id="RHEA:18257"/>
        <dbReference type="ChEBI" id="CHEBI:15377"/>
        <dbReference type="ChEBI" id="CHEBI:15378"/>
        <dbReference type="ChEBI" id="CHEBI:15379"/>
        <dbReference type="ChEBI" id="CHEBI:16526"/>
        <dbReference type="ChEBI" id="CHEBI:57307"/>
        <dbReference type="ChEBI" id="CHEBI:57309"/>
        <dbReference type="EC" id="1.3.3.3"/>
    </reaction>
</comment>
<comment type="cofactor">
    <cofactor evidence="4">
        <name>a divalent metal cation</name>
        <dbReference type="ChEBI" id="CHEBI:60240"/>
    </cofactor>
</comment>
<comment type="pathway">
    <text evidence="1">Porphyrin-containing compound metabolism; protoporphyrin-IX biosynthesis; protoporphyrinogen-IX from coproporphyrinogen-III (O2 route): step 1/1.</text>
</comment>
<comment type="subunit">
    <text evidence="1">Homodimer.</text>
</comment>
<comment type="subcellular location">
    <subcellularLocation>
        <location evidence="1">Cytoplasm</location>
    </subcellularLocation>
</comment>
<comment type="induction">
    <text evidence="3">Constitutively expressed.</text>
</comment>
<comment type="disruption phenotype">
    <text evidence="3">Cells lacking this gene fail to grow under aerobic conditions, with accumulation of coproporphyrin-III.</text>
</comment>
<comment type="similarity">
    <text evidence="1">Belongs to the aerobic coproporphyrinogen-III oxidase family.</text>
</comment>
<sequence>MTVSPTTQPQTNHSLPPADAKQRVSQFMQTLQDEICQGLEALDGKGKFQEDSWQREEGGGGRSRVLADGDFLEQGGVNFSEVWGKSLPPSILKQRPEAEGHEFYATGTSMVLHPKNPYIPTVHLNYRYFEAGPVWWFGGGADLTPYYPFAEDAAHFHHTLKNACDQTHGEFYPVFKRWCDEYFYLKHRQEMRGIGGIFFDYQDGNAPLYRGPDPNGPAAQYSNQLAPIEPLGWEDLFSFAQRCGRAFLPAYSPIVEKRRNTEYGDRQRQFQLYRRGRYVEFNLVYDRGTIFGLQTNGRTESILMSLPPLVRWQYCYSPEAGSPEAELTEKFLVPQDWVNS</sequence>
<organism>
    <name type="scientific">Synechocystis sp. (strain ATCC 27184 / PCC 6803 / Kazusa)</name>
    <dbReference type="NCBI Taxonomy" id="1111708"/>
    <lineage>
        <taxon>Bacteria</taxon>
        <taxon>Bacillati</taxon>
        <taxon>Cyanobacteriota</taxon>
        <taxon>Cyanophyceae</taxon>
        <taxon>Synechococcales</taxon>
        <taxon>Merismopediaceae</taxon>
        <taxon>Synechocystis</taxon>
    </lineage>
</organism>
<keyword id="KW-0149">Chlorophyll biosynthesis</keyword>
<keyword id="KW-0963">Cytoplasm</keyword>
<keyword id="KW-0350">Heme biosynthesis</keyword>
<keyword id="KW-0464">Manganese</keyword>
<keyword id="KW-0479">Metal-binding</keyword>
<keyword id="KW-0560">Oxidoreductase</keyword>
<keyword id="KW-0627">Porphyrin biosynthesis</keyword>
<keyword id="KW-1185">Reference proteome</keyword>
<evidence type="ECO:0000255" key="1">
    <source>
        <dbReference type="HAMAP-Rule" id="MF_00333"/>
    </source>
</evidence>
<evidence type="ECO:0000256" key="2">
    <source>
        <dbReference type="SAM" id="MobiDB-lite"/>
    </source>
</evidence>
<evidence type="ECO:0000269" key="3">
    <source>
    </source>
</evidence>
<evidence type="ECO:0000305" key="4">
    <source>
    </source>
</evidence>